<feature type="chain" id="PRO_0000452184" description="3-hydroxykynurenine transaminase">
    <location>
        <begin position="1"/>
        <end position="396"/>
    </location>
</feature>
<feature type="region of interest" description="Binds to and confers specificity for 3-hydroxykynurenine; shared with dimeric partner" evidence="11 16">
    <location>
        <begin position="43"/>
        <end position="44"/>
    </location>
</feature>
<feature type="binding site" description="in other chain" evidence="7 15 16">
    <location>
        <begin position="77"/>
        <end position="79"/>
    </location>
    <ligand>
        <name>pyridoxal 5'-phosphate</name>
        <dbReference type="ChEBI" id="CHEBI:597326"/>
        <note>ligand shared between dimeric partners</note>
    </ligand>
</feature>
<feature type="binding site" description="in other chain" evidence="7 15 16">
    <location>
        <position position="154"/>
    </location>
    <ligand>
        <name>pyridoxal 5'-phosphate</name>
        <dbReference type="ChEBI" id="CHEBI:597326"/>
        <note>ligand shared between dimeric partners</note>
    </ligand>
</feature>
<feature type="binding site" evidence="11 16">
    <location>
        <position position="154"/>
    </location>
    <ligand>
        <name>substrate</name>
    </ligand>
</feature>
<feature type="binding site" description="in other chain" evidence="7 15 16">
    <location>
        <position position="204"/>
    </location>
    <ligand>
        <name>pyridoxal 5'-phosphate</name>
        <dbReference type="ChEBI" id="CHEBI:597326"/>
        <note>ligand shared between dimeric partners</note>
    </ligand>
</feature>
<feature type="binding site" evidence="7 15 16">
    <location>
        <position position="256"/>
    </location>
    <ligand>
        <name>pyridoxal 5'-phosphate</name>
        <dbReference type="ChEBI" id="CHEBI:597326"/>
        <note>ligand shared between dimeric partners</note>
    </ligand>
</feature>
<feature type="binding site" evidence="7 15 16">
    <location>
        <position position="259"/>
    </location>
    <ligand>
        <name>pyridoxal 5'-phosphate</name>
        <dbReference type="ChEBI" id="CHEBI:597326"/>
        <note>ligand shared between dimeric partners</note>
    </ligand>
</feature>
<feature type="binding site" evidence="11 16">
    <location>
        <position position="356"/>
    </location>
    <ligand>
        <name>substrate</name>
    </ligand>
</feature>
<feature type="modified residue" description="N6-(pyridoxal phosphate)lysine" evidence="7 15 16">
    <location>
        <position position="205"/>
    </location>
</feature>
<feature type="helix" evidence="17">
    <location>
        <begin position="8"/>
        <end position="10"/>
    </location>
</feature>
<feature type="strand" evidence="17">
    <location>
        <begin position="23"/>
        <end position="26"/>
    </location>
</feature>
<feature type="helix" evidence="17">
    <location>
        <begin position="31"/>
        <end position="36"/>
    </location>
</feature>
<feature type="helix" evidence="17">
    <location>
        <begin position="47"/>
        <end position="64"/>
    </location>
</feature>
<feature type="strand" evidence="17">
    <location>
        <begin position="71"/>
        <end position="76"/>
    </location>
</feature>
<feature type="helix" evidence="17">
    <location>
        <begin position="78"/>
        <end position="89"/>
    </location>
</feature>
<feature type="strand" evidence="17">
    <location>
        <begin position="95"/>
        <end position="102"/>
    </location>
</feature>
<feature type="helix" evidence="17">
    <location>
        <begin position="103"/>
        <end position="114"/>
    </location>
</feature>
<feature type="strand" evidence="17">
    <location>
        <begin position="118"/>
        <end position="123"/>
    </location>
</feature>
<feature type="helix" evidence="17">
    <location>
        <begin position="132"/>
        <end position="142"/>
    </location>
</feature>
<feature type="strand" evidence="17">
    <location>
        <begin position="145"/>
        <end position="153"/>
    </location>
</feature>
<feature type="turn" evidence="17">
    <location>
        <begin position="154"/>
        <end position="157"/>
    </location>
</feature>
<feature type="helix" evidence="17">
    <location>
        <begin position="165"/>
        <end position="171"/>
    </location>
</feature>
<feature type="strand" evidence="17">
    <location>
        <begin position="175"/>
        <end position="179"/>
    </location>
</feature>
<feature type="turn" evidence="17">
    <location>
        <begin position="181"/>
        <end position="183"/>
    </location>
</feature>
<feature type="turn" evidence="17">
    <location>
        <begin position="191"/>
        <end position="195"/>
    </location>
</feature>
<feature type="strand" evidence="17">
    <location>
        <begin position="198"/>
        <end position="200"/>
    </location>
</feature>
<feature type="turn" evidence="17">
    <location>
        <begin position="203"/>
        <end position="207"/>
    </location>
</feature>
<feature type="strand" evidence="17">
    <location>
        <begin position="214"/>
        <end position="218"/>
    </location>
</feature>
<feature type="helix" evidence="17">
    <location>
        <begin position="220"/>
        <end position="227"/>
    </location>
</feature>
<feature type="helix" evidence="17">
    <location>
        <begin position="236"/>
        <end position="238"/>
    </location>
</feature>
<feature type="helix" evidence="17">
    <location>
        <begin position="240"/>
        <end position="246"/>
    </location>
</feature>
<feature type="strand" evidence="17">
    <location>
        <begin position="250"/>
        <end position="252"/>
    </location>
</feature>
<feature type="helix" evidence="17">
    <location>
        <begin position="262"/>
        <end position="278"/>
    </location>
</feature>
<feature type="helix" evidence="17">
    <location>
        <begin position="280"/>
        <end position="301"/>
    </location>
</feature>
<feature type="strand" evidence="17">
    <location>
        <begin position="305"/>
        <end position="307"/>
    </location>
</feature>
<feature type="helix" evidence="17">
    <location>
        <begin position="310"/>
        <end position="312"/>
    </location>
</feature>
<feature type="strand" evidence="17">
    <location>
        <begin position="317"/>
        <end position="321"/>
    </location>
</feature>
<feature type="helix" evidence="17">
    <location>
        <begin position="328"/>
        <end position="339"/>
    </location>
</feature>
<feature type="helix" evidence="17">
    <location>
        <begin position="348"/>
        <end position="350"/>
    </location>
</feature>
<feature type="turn" evidence="17">
    <location>
        <begin position="351"/>
        <end position="353"/>
    </location>
</feature>
<feature type="strand" evidence="17">
    <location>
        <begin position="354"/>
        <end position="358"/>
    </location>
</feature>
<feature type="helix" evidence="17">
    <location>
        <begin position="361"/>
        <end position="363"/>
    </location>
</feature>
<feature type="helix" evidence="17">
    <location>
        <begin position="366"/>
        <end position="383"/>
    </location>
</feature>
<dbReference type="EC" id="2.6.1.63" evidence="6"/>
<dbReference type="EC" id="2.6.1.44" evidence="2"/>
<dbReference type="EMBL" id="AM042695">
    <property type="protein sequence ID" value="CAJ14970.1"/>
    <property type="molecule type" value="mRNA"/>
</dbReference>
<dbReference type="EMBL" id="AAAB01008849">
    <property type="protein sequence ID" value="EAA07245.4"/>
    <property type="molecule type" value="Genomic_DNA"/>
</dbReference>
<dbReference type="RefSeq" id="XP_311559.3">
    <property type="nucleotide sequence ID" value="XM_311559.4"/>
</dbReference>
<dbReference type="PDB" id="2CH1">
    <property type="method" value="X-ray"/>
    <property type="resolution" value="2.40 A"/>
    <property type="chains" value="A/B/C/D=1-396"/>
</dbReference>
<dbReference type="PDB" id="2CH2">
    <property type="method" value="X-ray"/>
    <property type="resolution" value="2.70 A"/>
    <property type="chains" value="A/B/C/D=1-396"/>
</dbReference>
<dbReference type="PDBsum" id="2CH1"/>
<dbReference type="PDBsum" id="2CH2"/>
<dbReference type="SMR" id="Q7PRG3"/>
<dbReference type="DIP" id="DIP-61154N"/>
<dbReference type="STRING" id="7165.Q7PRG3"/>
<dbReference type="PaxDb" id="7165-AGAP010387-PC"/>
<dbReference type="EnsemblMetazoa" id="AGAP010387-RA">
    <property type="protein sequence ID" value="AGAP010387-PA"/>
    <property type="gene ID" value="AGAP010387"/>
</dbReference>
<dbReference type="EnsemblMetazoa" id="AGAP010387-RB">
    <property type="protein sequence ID" value="AGAP010387-PB"/>
    <property type="gene ID" value="AGAP010387"/>
</dbReference>
<dbReference type="VEuPathDB" id="VectorBase:AGAMI1_008497"/>
<dbReference type="VEuPathDB" id="VectorBase:AGAP010387"/>
<dbReference type="eggNOG" id="KOG2862">
    <property type="taxonomic scope" value="Eukaryota"/>
</dbReference>
<dbReference type="InParanoid" id="Q7PRG3"/>
<dbReference type="OMA" id="MFSHRWI"/>
<dbReference type="OrthoDB" id="7403325at2759"/>
<dbReference type="PhylomeDB" id="Q7PRG3"/>
<dbReference type="UniPathway" id="UPA00334">
    <property type="reaction ID" value="UER00726"/>
</dbReference>
<dbReference type="EvolutionaryTrace" id="Q7PRG3"/>
<dbReference type="Proteomes" id="UP000007062">
    <property type="component" value="Chromosome 3L"/>
</dbReference>
<dbReference type="GO" id="GO:0005777">
    <property type="term" value="C:peroxisome"/>
    <property type="evidence" value="ECO:0000318"/>
    <property type="project" value="GO_Central"/>
</dbReference>
<dbReference type="GO" id="GO:0008453">
    <property type="term" value="F:alanine-glyoxylate transaminase activity"/>
    <property type="evidence" value="ECO:0000314"/>
    <property type="project" value="UniProtKB"/>
</dbReference>
<dbReference type="GO" id="GO:0047315">
    <property type="term" value="F:kynurenine-glyoxylate transaminase activity"/>
    <property type="evidence" value="ECO:0000314"/>
    <property type="project" value="UniProtKB"/>
</dbReference>
<dbReference type="GO" id="GO:0004760">
    <property type="term" value="F:L-serine-pyruvate transaminase activity"/>
    <property type="evidence" value="ECO:0000318"/>
    <property type="project" value="GO_Central"/>
</dbReference>
<dbReference type="GO" id="GO:0030170">
    <property type="term" value="F:pyridoxal phosphate binding"/>
    <property type="evidence" value="ECO:0000314"/>
    <property type="project" value="UniProtKB"/>
</dbReference>
<dbReference type="GO" id="GO:0019265">
    <property type="term" value="P:glycine biosynthetic process, by transamination of glyoxylate"/>
    <property type="evidence" value="ECO:0000318"/>
    <property type="project" value="GO_Central"/>
</dbReference>
<dbReference type="GO" id="GO:0009436">
    <property type="term" value="P:glyoxylate catabolic process"/>
    <property type="evidence" value="ECO:0000314"/>
    <property type="project" value="UniProtKB"/>
</dbReference>
<dbReference type="GO" id="GO:0097053">
    <property type="term" value="P:L-kynurenine catabolic process"/>
    <property type="evidence" value="ECO:0000314"/>
    <property type="project" value="UniProtKB"/>
</dbReference>
<dbReference type="CDD" id="cd06451">
    <property type="entry name" value="AGAT_like"/>
    <property type="match status" value="1"/>
</dbReference>
<dbReference type="FunFam" id="3.90.1150.10:FF:000039">
    <property type="entry name" value="Serine--pyruvate aminotransferase"/>
    <property type="match status" value="1"/>
</dbReference>
<dbReference type="FunFam" id="3.40.640.10:FF:000027">
    <property type="entry name" value="Serine--pyruvate aminotransferase, mitochondrial"/>
    <property type="match status" value="1"/>
</dbReference>
<dbReference type="Gene3D" id="3.90.1150.10">
    <property type="entry name" value="Aspartate Aminotransferase, domain 1"/>
    <property type="match status" value="1"/>
</dbReference>
<dbReference type="Gene3D" id="3.40.640.10">
    <property type="entry name" value="Type I PLP-dependent aspartate aminotransferase-like (Major domain)"/>
    <property type="match status" value="1"/>
</dbReference>
<dbReference type="InterPro" id="IPR000192">
    <property type="entry name" value="Aminotrans_V_dom"/>
</dbReference>
<dbReference type="InterPro" id="IPR020578">
    <property type="entry name" value="Aminotrans_V_PyrdxlP_BS"/>
</dbReference>
<dbReference type="InterPro" id="IPR015424">
    <property type="entry name" value="PyrdxlP-dep_Trfase"/>
</dbReference>
<dbReference type="InterPro" id="IPR015421">
    <property type="entry name" value="PyrdxlP-dep_Trfase_major"/>
</dbReference>
<dbReference type="InterPro" id="IPR015422">
    <property type="entry name" value="PyrdxlP-dep_Trfase_small"/>
</dbReference>
<dbReference type="InterPro" id="IPR024169">
    <property type="entry name" value="SP_NH2Trfase/AEP_transaminase"/>
</dbReference>
<dbReference type="PANTHER" id="PTHR21152:SF40">
    <property type="entry name" value="ALANINE--GLYOXYLATE AMINOTRANSFERASE"/>
    <property type="match status" value="1"/>
</dbReference>
<dbReference type="PANTHER" id="PTHR21152">
    <property type="entry name" value="AMINOTRANSFERASE CLASS V"/>
    <property type="match status" value="1"/>
</dbReference>
<dbReference type="Pfam" id="PF00266">
    <property type="entry name" value="Aminotran_5"/>
    <property type="match status" value="1"/>
</dbReference>
<dbReference type="PIRSF" id="PIRSF000524">
    <property type="entry name" value="SPT"/>
    <property type="match status" value="1"/>
</dbReference>
<dbReference type="SUPFAM" id="SSF53383">
    <property type="entry name" value="PLP-dependent transferases"/>
    <property type="match status" value="1"/>
</dbReference>
<dbReference type="PROSITE" id="PS00595">
    <property type="entry name" value="AA_TRANSFER_CLASS_5"/>
    <property type="match status" value="1"/>
</dbReference>
<sequence>MKFTPPPASLRNPLIIPEKIMMGPGPSNCSKRVLTAMTNTVLSNFHAELFRTMDEVKDGLRYIFQTENRATMCVSGSAHAGMEAMLSNLLEEGDRVLIAVNGIWAERAVEMSERYGADVRTIEGPPDRPFSLETLARAIELHQPKCLFLTHGDSSSGLLQPLEGVGQICHQHDCLLIVDAVASLCGVPFYMDKWEIDAVYTGAQKVLGAPPGITPISISPKALDVIRNRRTKSKVFYWDLLLLGNYWGCYDEPKRYHHTVASNLIFALREALAQIAEEGLENQIKRRIECAQILYEGLGKMGLDIFVKDPRHRLPTVTGIMIPKGVDWWKVSQYAMNNFSLEVQGGLGPTFGKAWRVGIMGECSTVQKIQFYLYGFKESLKATHPDYIFEESNGFH</sequence>
<accession>Q7PRG3</accession>
<accession>Q4LAM2</accession>
<reference evidence="12" key="1">
    <citation type="journal article" date="2005" name="FEBS J.">
        <title>Identification and biochemical characterization of the Anopheles gambiae 3-hydroxykynurenine transaminase.</title>
        <authorList>
            <person name="Rossi F."/>
            <person name="Lombardo F."/>
            <person name="Paglino A."/>
            <person name="Cassani C."/>
            <person name="Miglio G."/>
            <person name="Arca B."/>
            <person name="Rizzi M."/>
        </authorList>
    </citation>
    <scope>NUCLEOTIDE SEQUENCE [MRNA]</scope>
    <scope>FUNCTION</scope>
    <scope>CATALYTIC ACTIVITY</scope>
    <scope>COFACTOR</scope>
    <scope>BIOPHYSICOCHEMICAL PROPERTIES</scope>
    <scope>PATHWAY</scope>
    <scope>SUBUNIT</scope>
    <scope>TISSUE SPECIFICITY</scope>
    <scope>DEVELOPMENTAL STAGE</scope>
</reference>
<reference evidence="14" key="2">
    <citation type="journal article" date="2002" name="Science">
        <title>The genome sequence of the malaria mosquito Anopheles gambiae.</title>
        <authorList>
            <person name="Holt R.A."/>
            <person name="Subramanian G.M."/>
            <person name="Halpern A."/>
            <person name="Sutton G.G."/>
            <person name="Charlab R."/>
            <person name="Nusskern D.R."/>
            <person name="Wincker P."/>
            <person name="Clark A.G."/>
            <person name="Ribeiro J.M.C."/>
            <person name="Wides R."/>
            <person name="Salzberg S.L."/>
            <person name="Loftus B.J."/>
            <person name="Yandell M.D."/>
            <person name="Majoros W.H."/>
            <person name="Rusch D.B."/>
            <person name="Lai Z."/>
            <person name="Kraft C.L."/>
            <person name="Abril J.F."/>
            <person name="Anthouard V."/>
            <person name="Arensburger P."/>
            <person name="Atkinson P.W."/>
            <person name="Baden H."/>
            <person name="de Berardinis V."/>
            <person name="Baldwin D."/>
            <person name="Benes V."/>
            <person name="Biedler J."/>
            <person name="Blass C."/>
            <person name="Bolanos R."/>
            <person name="Boscus D."/>
            <person name="Barnstead M."/>
            <person name="Cai S."/>
            <person name="Center A."/>
            <person name="Chaturverdi K."/>
            <person name="Christophides G.K."/>
            <person name="Chrystal M.A.M."/>
            <person name="Clamp M."/>
            <person name="Cravchik A."/>
            <person name="Curwen V."/>
            <person name="Dana A."/>
            <person name="Delcher A."/>
            <person name="Dew I."/>
            <person name="Evans C.A."/>
            <person name="Flanigan M."/>
            <person name="Grundschober-Freimoser A."/>
            <person name="Friedli L."/>
            <person name="Gu Z."/>
            <person name="Guan P."/>
            <person name="Guigo R."/>
            <person name="Hillenmeyer M.E."/>
            <person name="Hladun S.L."/>
            <person name="Hogan J.R."/>
            <person name="Hong Y.S."/>
            <person name="Hoover J."/>
            <person name="Jaillon O."/>
            <person name="Ke Z."/>
            <person name="Kodira C.D."/>
            <person name="Kokoza E."/>
            <person name="Koutsos A."/>
            <person name="Letunic I."/>
            <person name="Levitsky A.A."/>
            <person name="Liang Y."/>
            <person name="Lin J.-J."/>
            <person name="Lobo N.F."/>
            <person name="Lopez J.R."/>
            <person name="Malek J.A."/>
            <person name="McIntosh T.C."/>
            <person name="Meister S."/>
            <person name="Miller J.R."/>
            <person name="Mobarry C."/>
            <person name="Mongin E."/>
            <person name="Murphy S.D."/>
            <person name="O'Brochta D.A."/>
            <person name="Pfannkoch C."/>
            <person name="Qi R."/>
            <person name="Regier M.A."/>
            <person name="Remington K."/>
            <person name="Shao H."/>
            <person name="Sharakhova M.V."/>
            <person name="Sitter C.D."/>
            <person name="Shetty J."/>
            <person name="Smith T.J."/>
            <person name="Strong R."/>
            <person name="Sun J."/>
            <person name="Thomasova D."/>
            <person name="Ton L.Q."/>
            <person name="Topalis P."/>
            <person name="Tu Z.J."/>
            <person name="Unger M.F."/>
            <person name="Walenz B."/>
            <person name="Wang A.H."/>
            <person name="Wang J."/>
            <person name="Wang M."/>
            <person name="Wang X."/>
            <person name="Woodford K.J."/>
            <person name="Wortman J.R."/>
            <person name="Wu M."/>
            <person name="Yao A."/>
            <person name="Zdobnov E.M."/>
            <person name="Zhang H."/>
            <person name="Zhao Q."/>
            <person name="Zhao S."/>
            <person name="Zhu S.C."/>
            <person name="Zhimulev I."/>
            <person name="Coluzzi M."/>
            <person name="della Torre A."/>
            <person name="Roth C.W."/>
            <person name="Louis C."/>
            <person name="Kalush F."/>
            <person name="Mural R.J."/>
            <person name="Myers E.W."/>
            <person name="Adams M.D."/>
            <person name="Smith H.O."/>
            <person name="Broder S."/>
            <person name="Gardner M.J."/>
            <person name="Fraser C.M."/>
            <person name="Birney E."/>
            <person name="Bork P."/>
            <person name="Brey P.T."/>
            <person name="Venter J.C."/>
            <person name="Weissenbach J."/>
            <person name="Kafatos F.C."/>
            <person name="Collins F.H."/>
            <person name="Hoffman S.L."/>
        </authorList>
    </citation>
    <scope>NUCLEOTIDE SEQUENCE [LARGE SCALE GENOMIC DNA]</scope>
    <source>
        <strain evidence="14">PEST</strain>
    </source>
</reference>
<reference evidence="13" key="3">
    <citation type="journal article" date="2007" name="Genome Biol.">
        <title>Update of the Anopheles gambiae PEST genome assembly.</title>
        <authorList>
            <person name="Sharakhova M.V."/>
            <person name="Hammond M.P."/>
            <person name="Lobo N.F."/>
            <person name="Krzywinski J."/>
            <person name="Unger M.F."/>
            <person name="Hillenmeyer M.E."/>
            <person name="Bruggner R.V."/>
            <person name="Birney E."/>
            <person name="Collins F.H."/>
        </authorList>
    </citation>
    <scope>NUCLEOTIDE SEQUENCE [LARGE SCALE GENOMIC DNA]</scope>
    <source>
        <strain evidence="13">PEST</strain>
    </source>
</reference>
<reference evidence="15 16" key="4">
    <citation type="journal article" date="2006" name="Proc. Natl. Acad. Sci. U.S.A.">
        <title>Crystal structure of the Anopheles gambiae 3-hydroxykynurenine transaminase.</title>
        <authorList>
            <person name="Rossi F."/>
            <person name="Garavaglia S."/>
            <person name="Giovenzana G.B."/>
            <person name="Arca B."/>
            <person name="Li J."/>
            <person name="Rizzi M."/>
        </authorList>
    </citation>
    <scope>X-RAY CRYSTALLOGRAPHY (2.40 ANGSTROMS) IN COMPLEX WITH PYRIDOXAL 5-PHOSPHATE AND INHIBITOR</scope>
</reference>
<gene>
    <name evidence="9" type="primary">HKT</name>
    <name type="synonym">1272658</name>
    <name evidence="8" type="synonym">3hkt</name>
    <name evidence="13" type="ORF">AgaP_AGAP010387</name>
</gene>
<keyword id="KW-0002">3D-structure</keyword>
<keyword id="KW-0032">Aminotransferase</keyword>
<keyword id="KW-0576">Peroxisome</keyword>
<keyword id="KW-0663">Pyridoxal phosphate</keyword>
<keyword id="KW-1185">Reference proteome</keyword>
<keyword id="KW-0808">Transferase</keyword>
<evidence type="ECO:0000250" key="1">
    <source>
        <dbReference type="UniProtKB" id="P21549"/>
    </source>
</evidence>
<evidence type="ECO:0000250" key="2">
    <source>
        <dbReference type="UniProtKB" id="Q0IG34"/>
    </source>
</evidence>
<evidence type="ECO:0000255" key="3">
    <source>
        <dbReference type="PIRNR" id="PIRNR000524"/>
    </source>
</evidence>
<evidence type="ECO:0000255" key="4">
    <source>
        <dbReference type="RuleBase" id="RU004075"/>
    </source>
</evidence>
<evidence type="ECO:0000255" key="5">
    <source>
        <dbReference type="RuleBase" id="RU004504"/>
    </source>
</evidence>
<evidence type="ECO:0000269" key="6">
    <source>
    </source>
</evidence>
<evidence type="ECO:0000269" key="7">
    <source>
    </source>
</evidence>
<evidence type="ECO:0000303" key="8">
    <source>
    </source>
</evidence>
<evidence type="ECO:0000303" key="9">
    <source>
    </source>
</evidence>
<evidence type="ECO:0000305" key="10">
    <source>
    </source>
</evidence>
<evidence type="ECO:0000305" key="11">
    <source>
    </source>
</evidence>
<evidence type="ECO:0000312" key="12">
    <source>
        <dbReference type="EMBL" id="CAJ14970.1"/>
    </source>
</evidence>
<evidence type="ECO:0000312" key="13">
    <source>
        <dbReference type="EMBL" id="EAA07245.4"/>
    </source>
</evidence>
<evidence type="ECO:0000312" key="14">
    <source>
        <dbReference type="Proteomes" id="UP000007062"/>
    </source>
</evidence>
<evidence type="ECO:0007744" key="15">
    <source>
        <dbReference type="PDB" id="2CH1"/>
    </source>
</evidence>
<evidence type="ECO:0007744" key="16">
    <source>
        <dbReference type="PDB" id="2CH2"/>
    </source>
</evidence>
<evidence type="ECO:0007829" key="17">
    <source>
        <dbReference type="PDB" id="2CH1"/>
    </source>
</evidence>
<name>HKT_ANOGA</name>
<proteinExistence type="evidence at protein level"/>
<protein>
    <recommendedName>
        <fullName evidence="8">3-hydroxykynurenine transaminase</fullName>
        <ecNumber evidence="6">2.6.1.63</ecNumber>
    </recommendedName>
    <alternativeName>
        <fullName evidence="9">AgHKT</fullName>
    </alternativeName>
    <alternativeName>
        <fullName evidence="3">Alanine--glyoxylate aminotransferase</fullName>
        <ecNumber evidence="2">2.6.1.44</ecNumber>
    </alternativeName>
</protein>
<organism evidence="14">
    <name type="scientific">Anopheles gambiae</name>
    <name type="common">African malaria mosquito</name>
    <dbReference type="NCBI Taxonomy" id="7165"/>
    <lineage>
        <taxon>Eukaryota</taxon>
        <taxon>Metazoa</taxon>
        <taxon>Ecdysozoa</taxon>
        <taxon>Arthropoda</taxon>
        <taxon>Hexapoda</taxon>
        <taxon>Insecta</taxon>
        <taxon>Pterygota</taxon>
        <taxon>Neoptera</taxon>
        <taxon>Endopterygota</taxon>
        <taxon>Diptera</taxon>
        <taxon>Nematocera</taxon>
        <taxon>Culicoidea</taxon>
        <taxon>Culicidae</taxon>
        <taxon>Anophelinae</taxon>
        <taxon>Anopheles</taxon>
    </lineage>
</organism>
<comment type="function">
    <text evidence="2 6 10">Catalyzes the pyridoxal 5'-phosphate-dependent transamination of both 3-hydroxykynurenine and L-kynurenine to xanthurenic acid and kynurenic acid, respectively, preferentially using the alpha-ketoacid glyoxylate as the amino group acceptor (PubMed:16262702). Although glyoxylate is the preferred amino group acceptor, transamination of 3-hydroxykynurenine also works with pyruvate as the amino acceptor in vitro (PubMed:16262702). Involved in the detoxification of cytotoxic metabolite 3-hydroxykynurenine generated by the hydroxylation of L-kynurenine, an intermediate in the tryptophan catabolism pathway (PubMed:16262702). The Plasmodium parasite uses xanthurenic acid produced in the midgut to activate its gametocytes ingested during a blood meal (Probable). Also catalyzes, although with a lesser efficiency, the transamination of alanine with glyoxylate as an amino group acceptor (By similarity). May play a role in the detoxification of glyoxylate, a toxic plant metabolite from the diet (By similarity).</text>
</comment>
<comment type="catalytic activity">
    <reaction evidence="6">
        <text>L-kynurenine + glyoxylate = kynurenate + glycine + H2O</text>
        <dbReference type="Rhea" id="RHEA:65896"/>
        <dbReference type="ChEBI" id="CHEBI:15377"/>
        <dbReference type="ChEBI" id="CHEBI:36655"/>
        <dbReference type="ChEBI" id="CHEBI:57305"/>
        <dbReference type="ChEBI" id="CHEBI:57959"/>
        <dbReference type="ChEBI" id="CHEBI:58454"/>
        <dbReference type="EC" id="2.6.1.63"/>
    </reaction>
</comment>
<comment type="catalytic activity">
    <reaction evidence="6">
        <text>3-hydroxy-L-kynurenine + glyoxylate = xanthurenate + glycine + H2O</text>
        <dbReference type="Rhea" id="RHEA:65900"/>
        <dbReference type="ChEBI" id="CHEBI:15377"/>
        <dbReference type="ChEBI" id="CHEBI:36655"/>
        <dbReference type="ChEBI" id="CHEBI:57305"/>
        <dbReference type="ChEBI" id="CHEBI:58125"/>
        <dbReference type="ChEBI" id="CHEBI:71201"/>
        <dbReference type="EC" id="2.6.1.63"/>
    </reaction>
</comment>
<comment type="catalytic activity">
    <reaction evidence="6">
        <text>3-hydroxy-L-kynurenine + pyruvate = xanthurenate + L-alanine + H2O</text>
        <dbReference type="Rhea" id="RHEA:65908"/>
        <dbReference type="ChEBI" id="CHEBI:15361"/>
        <dbReference type="ChEBI" id="CHEBI:15377"/>
        <dbReference type="ChEBI" id="CHEBI:57972"/>
        <dbReference type="ChEBI" id="CHEBI:58125"/>
        <dbReference type="ChEBI" id="CHEBI:71201"/>
    </reaction>
</comment>
<comment type="catalytic activity">
    <reaction evidence="2">
        <text>glyoxylate + L-alanine = glycine + pyruvate</text>
        <dbReference type="Rhea" id="RHEA:24248"/>
        <dbReference type="ChEBI" id="CHEBI:15361"/>
        <dbReference type="ChEBI" id="CHEBI:36655"/>
        <dbReference type="ChEBI" id="CHEBI:57305"/>
        <dbReference type="ChEBI" id="CHEBI:57972"/>
        <dbReference type="EC" id="2.6.1.44"/>
    </reaction>
</comment>
<comment type="cofactor">
    <cofactor evidence="3 5 6 7">
        <name>pyridoxal 5'-phosphate</name>
        <dbReference type="ChEBI" id="CHEBI:597326"/>
    </cofactor>
</comment>
<comment type="biophysicochemical properties">
    <kinetics>
        <KM evidence="6">2 mM for D,L-3-hydroxykynurenine (at 50 degrees Celsius, pH 7 and with glyoxylate as cosubstrate)</KM>
        <KM evidence="6">2.3 mM for D,L-kynurenine (at 50 degrees Celsius, pH 7 and with glyoxylate as cosubstrate)</KM>
        <KM evidence="6">1 mM for L-kynurenine (at 50 degrees Celsius, pH 7 and with glyoxylate as cosubstrate)</KM>
        <KM evidence="6">2.7 mM for glyoxylate (at 50 degrees Celsius, pH 7 and with D,L-3-hydroxykynurenine as cosubstrate)</KM>
        <text evidence="6">kcat is 988.5 min(-1) for D,L-3-hydroxykynurenine (at 50 degrees Celsius, pH 7 and with glyoxylate as cosubstrate) (PubMed:16262702). kcat is 1077.2 min(-1) for D,L-kynurenine (at 50 degrees Celsius, pH 7 and with glyoxylate as cosubstrate) (PubMed:16262702). kcat is 611.5 min(-1) for L-kynurenine (at 50 degrees Celsius, pH 7 and with glyoxylate as cosubstrate) (PubMed:16262702). kcat is 2264.8 min(-1) for glyoxylate (at 50 degrees Celsius, pH 7 and with D,L-3-hydroxykynurenine as cosubstrate) (PubMed:16262702).</text>
    </kinetics>
    <phDependence>
        <text evidence="6">Optimum pH is 7.8.</text>
    </phDependence>
    <temperatureDependence>
        <text evidence="6">Optimum temperature is 60 degrees Celsius (PubMed:16262702). At physiological temperatures (30 degrees Celsius), retains 60-65% of its activity (PubMed:16262702).</text>
    </temperatureDependence>
</comment>
<comment type="pathway">
    <text evidence="6">Amino-acid degradation; L-kynurenine degradation; kynurenate from L-kynurenine: step 1/2.</text>
</comment>
<comment type="subunit">
    <text evidence="10">Homodimer.</text>
</comment>
<comment type="subcellular location">
    <subcellularLocation>
        <location evidence="1">Peroxisome</location>
    </subcellularLocation>
</comment>
<comment type="tissue specificity">
    <text evidence="6">Expressed in gut and ovaries.</text>
</comment>
<comment type="developmental stage">
    <text evidence="6">Expressed throughout embryonic and larval stages and in both adult males and females (PubMed:16262702). Expression is very low during the pupal stage (PubMed:16262702).</text>
</comment>
<comment type="similarity">
    <text evidence="3 4">Belongs to the class-V pyridoxal-phosphate-dependent aminotransferase family.</text>
</comment>